<evidence type="ECO:0000255" key="1">
    <source>
        <dbReference type="HAMAP-Rule" id="MF_00131"/>
    </source>
</evidence>
<accession>A1VY70</accession>
<proteinExistence type="inferred from homology"/>
<organism>
    <name type="scientific">Campylobacter jejuni subsp. jejuni serotype O:23/36 (strain 81-176)</name>
    <dbReference type="NCBI Taxonomy" id="354242"/>
    <lineage>
        <taxon>Bacteria</taxon>
        <taxon>Pseudomonadati</taxon>
        <taxon>Campylobacterota</taxon>
        <taxon>Epsilonproteobacteria</taxon>
        <taxon>Campylobacterales</taxon>
        <taxon>Campylobacteraceae</taxon>
        <taxon>Campylobacter</taxon>
    </lineage>
</organism>
<keyword id="KW-0028">Amino-acid biosynthesis</keyword>
<keyword id="KW-0057">Aromatic amino acid biosynthesis</keyword>
<keyword id="KW-0456">Lyase</keyword>
<keyword id="KW-0822">Tryptophan biosynthesis</keyword>
<feature type="chain" id="PRO_1000018184" description="Tryptophan synthase alpha chain">
    <location>
        <begin position="1"/>
        <end position="249"/>
    </location>
</feature>
<feature type="active site" description="Proton acceptor" evidence="1">
    <location>
        <position position="43"/>
    </location>
</feature>
<feature type="active site" description="Proton acceptor" evidence="1">
    <location>
        <position position="54"/>
    </location>
</feature>
<reference key="1">
    <citation type="submission" date="2006-12" db="EMBL/GenBank/DDBJ databases">
        <authorList>
            <person name="Fouts D.E."/>
            <person name="Nelson K.E."/>
            <person name="Sebastian Y."/>
        </authorList>
    </citation>
    <scope>NUCLEOTIDE SEQUENCE [LARGE SCALE GENOMIC DNA]</scope>
    <source>
        <strain>81-176</strain>
    </source>
</reference>
<protein>
    <recommendedName>
        <fullName evidence="1">Tryptophan synthase alpha chain</fullName>
        <ecNumber evidence="1">4.2.1.20</ecNumber>
    </recommendedName>
</protein>
<dbReference type="EC" id="4.2.1.20" evidence="1"/>
<dbReference type="EMBL" id="CP000538">
    <property type="protein sequence ID" value="EAQ73318.1"/>
    <property type="molecule type" value="Genomic_DNA"/>
</dbReference>
<dbReference type="RefSeq" id="WP_002868918.1">
    <property type="nucleotide sequence ID" value="NC_008787.1"/>
</dbReference>
<dbReference type="SMR" id="A1VY70"/>
<dbReference type="KEGG" id="cjj:CJJ81176_0373"/>
<dbReference type="eggNOG" id="COG0159">
    <property type="taxonomic scope" value="Bacteria"/>
</dbReference>
<dbReference type="HOGENOM" id="CLU_016734_0_0_7"/>
<dbReference type="UniPathway" id="UPA00035">
    <property type="reaction ID" value="UER00044"/>
</dbReference>
<dbReference type="Proteomes" id="UP000000646">
    <property type="component" value="Chromosome"/>
</dbReference>
<dbReference type="GO" id="GO:0005829">
    <property type="term" value="C:cytosol"/>
    <property type="evidence" value="ECO:0007669"/>
    <property type="project" value="TreeGrafter"/>
</dbReference>
<dbReference type="GO" id="GO:0004834">
    <property type="term" value="F:tryptophan synthase activity"/>
    <property type="evidence" value="ECO:0007669"/>
    <property type="project" value="UniProtKB-UniRule"/>
</dbReference>
<dbReference type="CDD" id="cd04724">
    <property type="entry name" value="Tryptophan_synthase_alpha"/>
    <property type="match status" value="1"/>
</dbReference>
<dbReference type="Gene3D" id="3.20.20.70">
    <property type="entry name" value="Aldolase class I"/>
    <property type="match status" value="1"/>
</dbReference>
<dbReference type="HAMAP" id="MF_00131">
    <property type="entry name" value="Trp_synth_alpha"/>
    <property type="match status" value="1"/>
</dbReference>
<dbReference type="InterPro" id="IPR013785">
    <property type="entry name" value="Aldolase_TIM"/>
</dbReference>
<dbReference type="InterPro" id="IPR011060">
    <property type="entry name" value="RibuloseP-bd_barrel"/>
</dbReference>
<dbReference type="InterPro" id="IPR018204">
    <property type="entry name" value="Trp_synthase_alpha_AS"/>
</dbReference>
<dbReference type="InterPro" id="IPR002028">
    <property type="entry name" value="Trp_synthase_suA"/>
</dbReference>
<dbReference type="NCBIfam" id="TIGR00262">
    <property type="entry name" value="trpA"/>
    <property type="match status" value="1"/>
</dbReference>
<dbReference type="PANTHER" id="PTHR43406:SF1">
    <property type="entry name" value="TRYPTOPHAN SYNTHASE ALPHA CHAIN, CHLOROPLASTIC"/>
    <property type="match status" value="1"/>
</dbReference>
<dbReference type="PANTHER" id="PTHR43406">
    <property type="entry name" value="TRYPTOPHAN SYNTHASE, ALPHA CHAIN"/>
    <property type="match status" value="1"/>
</dbReference>
<dbReference type="Pfam" id="PF00290">
    <property type="entry name" value="Trp_syntA"/>
    <property type="match status" value="1"/>
</dbReference>
<dbReference type="SUPFAM" id="SSF51366">
    <property type="entry name" value="Ribulose-phoshate binding barrel"/>
    <property type="match status" value="1"/>
</dbReference>
<dbReference type="PROSITE" id="PS00167">
    <property type="entry name" value="TRP_SYNTHASE_ALPHA"/>
    <property type="match status" value="1"/>
</dbReference>
<sequence length="249" mass="27999">MVDFRKFYKENANVAYTVLGYPNLQTSEAFLQRLDQSPIDILELGVAYSDPIADGEIIADAAKIALDQGMDIHSVFELLARIKTKKALVFMVYYNLIFSYGLEKFVKKAKSLGICALIVPELSFEESDDLIKECERYNIALITLVSVTTPKERVKKLVKHAKGFIYLLASIGITGTKSVEEAILQDKVKEIRSFTNLPIFVGFGIQNNQDVKRMRKVADGVIVGTSIVKCFKQGNLDIIMKDIEEIFKK</sequence>
<gene>
    <name evidence="1" type="primary">trpA</name>
    <name type="ordered locus">CJJ81176_0373</name>
</gene>
<name>TRPA_CAMJJ</name>
<comment type="function">
    <text evidence="1">The alpha subunit is responsible for the aldol cleavage of indoleglycerol phosphate to indole and glyceraldehyde 3-phosphate.</text>
</comment>
<comment type="catalytic activity">
    <reaction evidence="1">
        <text>(1S,2R)-1-C-(indol-3-yl)glycerol 3-phosphate + L-serine = D-glyceraldehyde 3-phosphate + L-tryptophan + H2O</text>
        <dbReference type="Rhea" id="RHEA:10532"/>
        <dbReference type="ChEBI" id="CHEBI:15377"/>
        <dbReference type="ChEBI" id="CHEBI:33384"/>
        <dbReference type="ChEBI" id="CHEBI:57912"/>
        <dbReference type="ChEBI" id="CHEBI:58866"/>
        <dbReference type="ChEBI" id="CHEBI:59776"/>
        <dbReference type="EC" id="4.2.1.20"/>
    </reaction>
</comment>
<comment type="pathway">
    <text evidence="1">Amino-acid biosynthesis; L-tryptophan biosynthesis; L-tryptophan from chorismate: step 5/5.</text>
</comment>
<comment type="subunit">
    <text evidence="1">Tetramer of two alpha and two beta chains.</text>
</comment>
<comment type="similarity">
    <text evidence="1">Belongs to the TrpA family.</text>
</comment>